<organism>
    <name type="scientific">Rhizobium johnstonii (strain DSM 114642 / LMG 32736 / 3841)</name>
    <name type="common">Rhizobium leguminosarum bv. viciae</name>
    <dbReference type="NCBI Taxonomy" id="216596"/>
    <lineage>
        <taxon>Bacteria</taxon>
        <taxon>Pseudomonadati</taxon>
        <taxon>Pseudomonadota</taxon>
        <taxon>Alphaproteobacteria</taxon>
        <taxon>Hyphomicrobiales</taxon>
        <taxon>Rhizobiaceae</taxon>
        <taxon>Rhizobium/Agrobacterium group</taxon>
        <taxon>Rhizobium</taxon>
        <taxon>Rhizobium johnstonii</taxon>
    </lineage>
</organism>
<gene>
    <name type="primary">dadX</name>
    <name type="ordered locus">pRL120416</name>
</gene>
<protein>
    <recommendedName>
        <fullName>Alanine racemase, catabolic</fullName>
        <ecNumber>5.1.1.1</ecNumber>
    </recommendedName>
</protein>
<accession>Q9RAE7</accession>
<accession>Q1M447</accession>
<name>ALR2_RHIJ3</name>
<evidence type="ECO:0000250" key="1"/>
<evidence type="ECO:0000305" key="2"/>
<proteinExistence type="inferred from homology"/>
<reference key="1">
    <citation type="journal article" date="2000" name="Mol. Microbiol.">
        <title>Identification of alanine dehydrogenase and its role in mixed secretion of ammonium and alanine by pea bacteroids.</title>
        <authorList>
            <person name="Allaway D.A."/>
            <person name="Lodwig E.M."/>
            <person name="Crompton L.A."/>
            <person name="Wood M."/>
            <person name="Parsons R."/>
            <person name="Wheeler T.R."/>
            <person name="Poole P.S."/>
        </authorList>
    </citation>
    <scope>NUCLEOTIDE SEQUENCE [GENOMIC DNA]</scope>
</reference>
<reference key="2">
    <citation type="journal article" date="2006" name="Genome Biol.">
        <title>The genome of Rhizobium leguminosarum has recognizable core and accessory components.</title>
        <authorList>
            <person name="Young J.P.W."/>
            <person name="Crossman L.C."/>
            <person name="Johnston A.W.B."/>
            <person name="Thomson N.R."/>
            <person name="Ghazoui Z.F."/>
            <person name="Hull K.H."/>
            <person name="Wexler M."/>
            <person name="Curson A.R.J."/>
            <person name="Todd J.D."/>
            <person name="Poole P.S."/>
            <person name="Mauchline T.H."/>
            <person name="East A.K."/>
            <person name="Quail M.A."/>
            <person name="Churcher C."/>
            <person name="Arrowsmith C."/>
            <person name="Cherevach I."/>
            <person name="Chillingworth T."/>
            <person name="Clarke K."/>
            <person name="Cronin A."/>
            <person name="Davis P."/>
            <person name="Fraser A."/>
            <person name="Hance Z."/>
            <person name="Hauser H."/>
            <person name="Jagels K."/>
            <person name="Moule S."/>
            <person name="Mungall K."/>
            <person name="Norbertczak H."/>
            <person name="Rabbinowitsch E."/>
            <person name="Sanders M."/>
            <person name="Simmonds M."/>
            <person name="Whitehead S."/>
            <person name="Parkhill J."/>
        </authorList>
    </citation>
    <scope>NUCLEOTIDE SEQUENCE [LARGE SCALE GENOMIC DNA]</scope>
    <source>
        <strain>DSM 114642 / LMG 32736 / 3841</strain>
        <plasmid>pRL12</plasmid>
    </source>
</reference>
<keyword id="KW-0413">Isomerase</keyword>
<keyword id="KW-0614">Plasmid</keyword>
<keyword id="KW-0663">Pyridoxal phosphate</keyword>
<dbReference type="EC" id="5.1.1.1"/>
<dbReference type="EMBL" id="AJ249196">
    <property type="protein sequence ID" value="CAB53547.1"/>
    <property type="status" value="ALT_INIT"/>
    <property type="molecule type" value="Genomic_DNA"/>
</dbReference>
<dbReference type="EMBL" id="AM236086">
    <property type="protein sequence ID" value="CAK12125.1"/>
    <property type="molecule type" value="Genomic_DNA"/>
</dbReference>
<dbReference type="SMR" id="Q9RAE7"/>
<dbReference type="EnsemblBacteria" id="CAK12125">
    <property type="protein sequence ID" value="CAK12125"/>
    <property type="gene ID" value="pRL120416"/>
</dbReference>
<dbReference type="KEGG" id="rle:pRL120416"/>
<dbReference type="eggNOG" id="COG0787">
    <property type="taxonomic scope" value="Bacteria"/>
</dbReference>
<dbReference type="HOGENOM" id="CLU_028393_1_1_5"/>
<dbReference type="Proteomes" id="UP000006575">
    <property type="component" value="Plasmid pRL12"/>
</dbReference>
<dbReference type="GO" id="GO:0005829">
    <property type="term" value="C:cytosol"/>
    <property type="evidence" value="ECO:0007669"/>
    <property type="project" value="TreeGrafter"/>
</dbReference>
<dbReference type="GO" id="GO:0008784">
    <property type="term" value="F:alanine racemase activity"/>
    <property type="evidence" value="ECO:0007669"/>
    <property type="project" value="UniProtKB-UniRule"/>
</dbReference>
<dbReference type="GO" id="GO:0030170">
    <property type="term" value="F:pyridoxal phosphate binding"/>
    <property type="evidence" value="ECO:0007669"/>
    <property type="project" value="UniProtKB-UniRule"/>
</dbReference>
<dbReference type="GO" id="GO:0030632">
    <property type="term" value="P:D-alanine biosynthetic process"/>
    <property type="evidence" value="ECO:0007669"/>
    <property type="project" value="UniProtKB-UniRule"/>
</dbReference>
<dbReference type="CDD" id="cd00430">
    <property type="entry name" value="PLPDE_III_AR"/>
    <property type="match status" value="1"/>
</dbReference>
<dbReference type="Gene3D" id="3.20.20.10">
    <property type="entry name" value="Alanine racemase"/>
    <property type="match status" value="1"/>
</dbReference>
<dbReference type="Gene3D" id="2.40.37.10">
    <property type="entry name" value="Lyase, Ornithine Decarboxylase, Chain A, domain 1"/>
    <property type="match status" value="1"/>
</dbReference>
<dbReference type="HAMAP" id="MF_01201">
    <property type="entry name" value="Ala_racemase"/>
    <property type="match status" value="1"/>
</dbReference>
<dbReference type="InterPro" id="IPR000821">
    <property type="entry name" value="Ala_racemase"/>
</dbReference>
<dbReference type="InterPro" id="IPR009006">
    <property type="entry name" value="Ala_racemase/Decarboxylase_C"/>
</dbReference>
<dbReference type="InterPro" id="IPR011079">
    <property type="entry name" value="Ala_racemase_C"/>
</dbReference>
<dbReference type="InterPro" id="IPR001608">
    <property type="entry name" value="Ala_racemase_N"/>
</dbReference>
<dbReference type="InterPro" id="IPR020622">
    <property type="entry name" value="Ala_racemase_pyridoxalP-BS"/>
</dbReference>
<dbReference type="InterPro" id="IPR029066">
    <property type="entry name" value="PLP-binding_barrel"/>
</dbReference>
<dbReference type="NCBIfam" id="TIGR00492">
    <property type="entry name" value="alr"/>
    <property type="match status" value="1"/>
</dbReference>
<dbReference type="PANTHER" id="PTHR30511">
    <property type="entry name" value="ALANINE RACEMASE"/>
    <property type="match status" value="1"/>
</dbReference>
<dbReference type="PANTHER" id="PTHR30511:SF0">
    <property type="entry name" value="ALANINE RACEMASE, CATABOLIC-RELATED"/>
    <property type="match status" value="1"/>
</dbReference>
<dbReference type="Pfam" id="PF00842">
    <property type="entry name" value="Ala_racemase_C"/>
    <property type="match status" value="1"/>
</dbReference>
<dbReference type="Pfam" id="PF01168">
    <property type="entry name" value="Ala_racemase_N"/>
    <property type="match status" value="1"/>
</dbReference>
<dbReference type="PRINTS" id="PR00992">
    <property type="entry name" value="ALARACEMASE"/>
</dbReference>
<dbReference type="SMART" id="SM01005">
    <property type="entry name" value="Ala_racemase_C"/>
    <property type="match status" value="1"/>
</dbReference>
<dbReference type="SUPFAM" id="SSF50621">
    <property type="entry name" value="Alanine racemase C-terminal domain-like"/>
    <property type="match status" value="1"/>
</dbReference>
<dbReference type="SUPFAM" id="SSF51419">
    <property type="entry name" value="PLP-binding barrel"/>
    <property type="match status" value="1"/>
</dbReference>
<dbReference type="PROSITE" id="PS00395">
    <property type="entry name" value="ALANINE_RACEMASE"/>
    <property type="match status" value="1"/>
</dbReference>
<comment type="function">
    <text>Isomerizes L-alanine to D-alanine which is then oxidized to pyruvate by DadA.</text>
</comment>
<comment type="catalytic activity">
    <reaction>
        <text>L-alanine = D-alanine</text>
        <dbReference type="Rhea" id="RHEA:20249"/>
        <dbReference type="ChEBI" id="CHEBI:57416"/>
        <dbReference type="ChEBI" id="CHEBI:57972"/>
        <dbReference type="EC" id="5.1.1.1"/>
    </reaction>
</comment>
<comment type="cofactor">
    <cofactor evidence="1">
        <name>pyridoxal 5'-phosphate</name>
        <dbReference type="ChEBI" id="CHEBI:597326"/>
    </cofactor>
</comment>
<comment type="similarity">
    <text evidence="2">Belongs to the alanine racemase family.</text>
</comment>
<comment type="sequence caution" evidence="2">
    <conflict type="erroneous initiation">
        <sequence resource="EMBL-CDS" id="CAB53547"/>
    </conflict>
</comment>
<feature type="chain" id="PRO_0000114554" description="Alanine racemase, catabolic">
    <location>
        <begin position="1"/>
        <end position="377"/>
    </location>
</feature>
<feature type="active site" description="Proton acceptor; specific for D-alanine" evidence="1">
    <location>
        <position position="51"/>
    </location>
</feature>
<feature type="active site" description="Proton acceptor; specific for L-alanine" evidence="1">
    <location>
        <position position="272"/>
    </location>
</feature>
<feature type="binding site" evidence="1">
    <location>
        <position position="150"/>
    </location>
    <ligand>
        <name>substrate</name>
    </ligand>
</feature>
<feature type="binding site" evidence="1">
    <location>
        <position position="320"/>
    </location>
    <ligand>
        <name>substrate</name>
    </ligand>
</feature>
<feature type="modified residue" description="N6-(pyridoxal phosphate)lysine" evidence="1">
    <location>
        <position position="51"/>
    </location>
</feature>
<geneLocation type="plasmid">
    <name>pRL12</name>
</geneLocation>
<sequence>MDSDILVSRTRTATIAQGATGYLMIDLAALGRNYRKLVSMLAPVRAGAVVKADAYGLGAERVARTLYSEGCRHFFVAQFVEAVRLRPALAHDAQIFVLNGLQPGNEIACAEMGIVPVLNSLAQWRQWSAAARILKRCLPAVLQFDTGMSRLGFPREERRELAAALRDGSNVEILFIMSHLASADDMGSEQNGEQFAEMSRIADEFPGFDISFANSGGVFLGEAYYGVLARPGIALYGGAPNAGEKNPMEPVVSLNVAVVQTRTVPAGAKVGYGGAHVTQRETRLATIAAGYADGLPRCLSDRGAVYFKGVRLPIVGRVSMDSTTVDITALPEGALTFGSLVEVLGRHQTLEDIARDAGTISYEILTGLGDRYDRQYR</sequence>